<evidence type="ECO:0000250" key="1"/>
<evidence type="ECO:0000255" key="2"/>
<evidence type="ECO:0000305" key="3"/>
<reference key="1">
    <citation type="journal article" date="2006" name="Mol. Phylogenet. Evol.">
        <title>Dispersal and vicariance: the complex evolutionary history of boid snakes.</title>
        <authorList>
            <person name="Noonan B.P."/>
            <person name="Chippindale P.T."/>
        </authorList>
    </citation>
    <scope>NUCLEOTIDE SEQUENCE [GENOMIC DNA]</scope>
</reference>
<comment type="function">
    <text evidence="1">Promotes the survival of neuronal populations that are all located either in the central nervous system or directly connected to it.</text>
</comment>
<comment type="subcellular location">
    <subcellularLocation>
        <location evidence="1">Secreted</location>
    </subcellularLocation>
</comment>
<comment type="similarity">
    <text evidence="3">Belongs to the NGF-beta family.</text>
</comment>
<gene>
    <name type="primary">BDNF</name>
</gene>
<protein>
    <recommendedName>
        <fullName evidence="3">Neurotrophic factor BDNF precursor form</fullName>
        <shortName>proBDNF</shortName>
    </recommendedName>
    <alternativeName>
        <fullName>Brain-derived neurotrophic factor</fullName>
    </alternativeName>
    <component>
        <recommendedName>
            <fullName>Neurotrophic factor BDNF</fullName>
        </recommendedName>
    </component>
</protein>
<proteinExistence type="inferred from homology"/>
<organism>
    <name type="scientific">Exiliboa placata</name>
    <name type="common">Oaxacan dwarf boa</name>
    <dbReference type="NCBI Taxonomy" id="196258"/>
    <lineage>
        <taxon>Eukaryota</taxon>
        <taxon>Metazoa</taxon>
        <taxon>Chordata</taxon>
        <taxon>Craniata</taxon>
        <taxon>Vertebrata</taxon>
        <taxon>Euteleostomi</taxon>
        <taxon>Lepidosauria</taxon>
        <taxon>Squamata</taxon>
        <taxon>Bifurcata</taxon>
        <taxon>Unidentata</taxon>
        <taxon>Episquamata</taxon>
        <taxon>Toxicofera</taxon>
        <taxon>Serpentes</taxon>
        <taxon>Henophidia</taxon>
        <taxon>Tropidophiidae</taxon>
        <taxon>Exiliboa</taxon>
    </lineage>
</organism>
<accession>Q1X704</accession>
<dbReference type="EMBL" id="AY988034">
    <property type="protein sequence ID" value="AAY44241.1"/>
    <property type="molecule type" value="Genomic_DNA"/>
</dbReference>
<dbReference type="SMR" id="Q1X704"/>
<dbReference type="GlyCosmos" id="Q1X704">
    <property type="glycosylation" value="1 site, No reported glycans"/>
</dbReference>
<dbReference type="GO" id="GO:0030424">
    <property type="term" value="C:axon"/>
    <property type="evidence" value="ECO:0007669"/>
    <property type="project" value="TreeGrafter"/>
</dbReference>
<dbReference type="GO" id="GO:0030425">
    <property type="term" value="C:dendrite"/>
    <property type="evidence" value="ECO:0007669"/>
    <property type="project" value="TreeGrafter"/>
</dbReference>
<dbReference type="GO" id="GO:0005615">
    <property type="term" value="C:extracellular space"/>
    <property type="evidence" value="ECO:0007669"/>
    <property type="project" value="TreeGrafter"/>
</dbReference>
<dbReference type="GO" id="GO:0008021">
    <property type="term" value="C:synaptic vesicle"/>
    <property type="evidence" value="ECO:0007669"/>
    <property type="project" value="TreeGrafter"/>
</dbReference>
<dbReference type="GO" id="GO:0008083">
    <property type="term" value="F:growth factor activity"/>
    <property type="evidence" value="ECO:0007669"/>
    <property type="project" value="UniProtKB-KW"/>
</dbReference>
<dbReference type="GO" id="GO:0005163">
    <property type="term" value="F:nerve growth factor receptor binding"/>
    <property type="evidence" value="ECO:0007669"/>
    <property type="project" value="TreeGrafter"/>
</dbReference>
<dbReference type="GO" id="GO:0007169">
    <property type="term" value="P:cell surface receptor protein tyrosine kinase signaling pathway"/>
    <property type="evidence" value="ECO:0007669"/>
    <property type="project" value="TreeGrafter"/>
</dbReference>
<dbReference type="GO" id="GO:0050804">
    <property type="term" value="P:modulation of chemical synaptic transmission"/>
    <property type="evidence" value="ECO:0007669"/>
    <property type="project" value="TreeGrafter"/>
</dbReference>
<dbReference type="GO" id="GO:0043524">
    <property type="term" value="P:negative regulation of neuron apoptotic process"/>
    <property type="evidence" value="ECO:0007669"/>
    <property type="project" value="TreeGrafter"/>
</dbReference>
<dbReference type="GO" id="GO:0021675">
    <property type="term" value="P:nerve development"/>
    <property type="evidence" value="ECO:0007669"/>
    <property type="project" value="TreeGrafter"/>
</dbReference>
<dbReference type="GO" id="GO:0038180">
    <property type="term" value="P:nerve growth factor signaling pathway"/>
    <property type="evidence" value="ECO:0007669"/>
    <property type="project" value="TreeGrafter"/>
</dbReference>
<dbReference type="GO" id="GO:0048812">
    <property type="term" value="P:neuron projection morphogenesis"/>
    <property type="evidence" value="ECO:0007669"/>
    <property type="project" value="TreeGrafter"/>
</dbReference>
<dbReference type="FunFam" id="2.10.90.10:FF:000002">
    <property type="entry name" value="Brain-derived neurotrophic factor"/>
    <property type="match status" value="1"/>
</dbReference>
<dbReference type="Gene3D" id="2.10.90.10">
    <property type="entry name" value="Cystine-knot cytokines"/>
    <property type="match status" value="1"/>
</dbReference>
<dbReference type="InterPro" id="IPR020430">
    <property type="entry name" value="Brain-der_neurotrophic_factor"/>
</dbReference>
<dbReference type="InterPro" id="IPR029034">
    <property type="entry name" value="Cystine-knot_cytokine"/>
</dbReference>
<dbReference type="InterPro" id="IPR020408">
    <property type="entry name" value="Nerve_growth_factor-like"/>
</dbReference>
<dbReference type="InterPro" id="IPR002072">
    <property type="entry name" value="Nerve_growth_factor-rel"/>
</dbReference>
<dbReference type="InterPro" id="IPR019846">
    <property type="entry name" value="Nerve_growth_factor_CS"/>
</dbReference>
<dbReference type="PANTHER" id="PTHR11589:SF3">
    <property type="entry name" value="BRAIN-DERIVED NEUROTROPHIC FACTOR"/>
    <property type="match status" value="1"/>
</dbReference>
<dbReference type="PANTHER" id="PTHR11589">
    <property type="entry name" value="NERVE GROWTH FACTOR NGF -RELATED"/>
    <property type="match status" value="1"/>
</dbReference>
<dbReference type="Pfam" id="PF00243">
    <property type="entry name" value="NGF"/>
    <property type="match status" value="1"/>
</dbReference>
<dbReference type="PIRSF" id="PIRSF001789">
    <property type="entry name" value="NGF"/>
    <property type="match status" value="1"/>
</dbReference>
<dbReference type="PRINTS" id="PR01912">
    <property type="entry name" value="BDNFACTOR"/>
</dbReference>
<dbReference type="PRINTS" id="PR00268">
    <property type="entry name" value="NGF"/>
</dbReference>
<dbReference type="SMART" id="SM00140">
    <property type="entry name" value="NGF"/>
    <property type="match status" value="1"/>
</dbReference>
<dbReference type="SUPFAM" id="SSF57501">
    <property type="entry name" value="Cystine-knot cytokines"/>
    <property type="match status" value="1"/>
</dbReference>
<dbReference type="PROSITE" id="PS00248">
    <property type="entry name" value="NGF_1"/>
    <property type="match status" value="1"/>
</dbReference>
<dbReference type="PROSITE" id="PS50270">
    <property type="entry name" value="NGF_2"/>
    <property type="match status" value="1"/>
</dbReference>
<feature type="signal peptide" evidence="2">
    <location>
        <begin position="1" status="less than"/>
        <end position="5"/>
    </location>
</feature>
<feature type="propeptide" id="PRO_0000346689" evidence="1">
    <location>
        <begin position="6"/>
        <end position="114"/>
    </location>
</feature>
<feature type="chain" id="PRO_0000346690" description="Neurotrophic factor BDNF">
    <location>
        <begin position="115"/>
        <end position="223" status="greater than"/>
    </location>
</feature>
<feature type="glycosylation site" description="N-linked (GlcNAc...) asparagine" evidence="2">
    <location>
        <position position="107"/>
    </location>
</feature>
<feature type="disulfide bond" evidence="1">
    <location>
        <begin position="127"/>
        <end position="194"/>
    </location>
</feature>
<feature type="disulfide bond" evidence="1">
    <location>
        <begin position="172"/>
        <end position="223"/>
    </location>
</feature>
<feature type="non-terminal residue">
    <location>
        <position position="1"/>
    </location>
</feature>
<feature type="non-terminal residue">
    <location>
        <position position="223"/>
    </location>
</feature>
<sequence length="223" mass="25089">SCMKAAPMKEVSIRGQGSLAYPGLRTQGNLETLSGPNDATRGLTSLADTFEHVIEELLDEQEVIQPSKENKDADLYSSRVMLSSQVPLEPPLLFLLEEYKNYLDAANMSMRVRRHSDPARRGELSVCDSISEWVTAAEKKTAVDMSGATVTVLEKVPVPKGQLKQYFYETKCSSKGYAKEGCRGIDKRYWNSQCRTTQSYVRALTMDNKKRVGWRFIRIDTSC</sequence>
<keyword id="KW-0165">Cleavage on pair of basic residues</keyword>
<keyword id="KW-1015">Disulfide bond</keyword>
<keyword id="KW-0325">Glycoprotein</keyword>
<keyword id="KW-0339">Growth factor</keyword>
<keyword id="KW-0964">Secreted</keyword>
<keyword id="KW-0732">Signal</keyword>
<name>BDNF_EXIPL</name>